<comment type="function">
    <text evidence="1">Catalyzes the oxidation of 3-carboxy-2-hydroxy-4-methylpentanoate (3-isopropylmalate) to 3-carboxy-4-methyl-2-oxopentanoate. The product decarboxylates to 4-methyl-2 oxopentanoate.</text>
</comment>
<comment type="catalytic activity">
    <reaction evidence="1">
        <text>(2R,3S)-3-isopropylmalate + NAD(+) = 4-methyl-2-oxopentanoate + CO2 + NADH</text>
        <dbReference type="Rhea" id="RHEA:32271"/>
        <dbReference type="ChEBI" id="CHEBI:16526"/>
        <dbReference type="ChEBI" id="CHEBI:17865"/>
        <dbReference type="ChEBI" id="CHEBI:35121"/>
        <dbReference type="ChEBI" id="CHEBI:57540"/>
        <dbReference type="ChEBI" id="CHEBI:57945"/>
        <dbReference type="EC" id="1.1.1.85"/>
    </reaction>
</comment>
<comment type="cofactor">
    <cofactor evidence="1">
        <name>Mg(2+)</name>
        <dbReference type="ChEBI" id="CHEBI:18420"/>
    </cofactor>
    <cofactor evidence="1">
        <name>Mn(2+)</name>
        <dbReference type="ChEBI" id="CHEBI:29035"/>
    </cofactor>
    <text evidence="1">Binds 1 Mg(2+) or Mn(2+) ion per subunit.</text>
</comment>
<comment type="pathway">
    <text evidence="1">Amino-acid biosynthesis; L-leucine biosynthesis; L-leucine from 3-methyl-2-oxobutanoate: step 3/4.</text>
</comment>
<comment type="subunit">
    <text evidence="1">Homodimer.</text>
</comment>
<comment type="subcellular location">
    <subcellularLocation>
        <location evidence="1">Cytoplasm</location>
    </subcellularLocation>
</comment>
<comment type="similarity">
    <text evidence="1">Belongs to the isocitrate and isopropylmalate dehydrogenases family. LeuB type 1 subfamily.</text>
</comment>
<protein>
    <recommendedName>
        <fullName evidence="1">3-isopropylmalate dehydrogenase</fullName>
        <ecNumber evidence="1">1.1.1.85</ecNumber>
    </recommendedName>
    <alternativeName>
        <fullName evidence="1">3-IPM-DH</fullName>
    </alternativeName>
    <alternativeName>
        <fullName evidence="1">Beta-IPM dehydrogenase</fullName>
        <shortName evidence="1">IMDH</shortName>
    </alternativeName>
</protein>
<name>LEU3_XANC8</name>
<gene>
    <name evidence="1" type="primary">leuB</name>
    <name type="ordered locus">XC_0836</name>
</gene>
<reference key="1">
    <citation type="journal article" date="2005" name="Genome Res.">
        <title>Comparative and functional genomic analyses of the pathogenicity of phytopathogen Xanthomonas campestris pv. campestris.</title>
        <authorList>
            <person name="Qian W."/>
            <person name="Jia Y."/>
            <person name="Ren S.-X."/>
            <person name="He Y.-Q."/>
            <person name="Feng J.-X."/>
            <person name="Lu L.-F."/>
            <person name="Sun Q."/>
            <person name="Ying G."/>
            <person name="Tang D.-J."/>
            <person name="Tang H."/>
            <person name="Wu W."/>
            <person name="Hao P."/>
            <person name="Wang L."/>
            <person name="Jiang B.-L."/>
            <person name="Zeng S."/>
            <person name="Gu W.-Y."/>
            <person name="Lu G."/>
            <person name="Rong L."/>
            <person name="Tian Y."/>
            <person name="Yao Z."/>
            <person name="Fu G."/>
            <person name="Chen B."/>
            <person name="Fang R."/>
            <person name="Qiang B."/>
            <person name="Chen Z."/>
            <person name="Zhao G.-P."/>
            <person name="Tang J.-L."/>
            <person name="He C."/>
        </authorList>
    </citation>
    <scope>NUCLEOTIDE SEQUENCE [LARGE SCALE GENOMIC DNA]</scope>
    <source>
        <strain>8004</strain>
    </source>
</reference>
<dbReference type="EC" id="1.1.1.85" evidence="1"/>
<dbReference type="EMBL" id="CP000050">
    <property type="protein sequence ID" value="AAY47911.1"/>
    <property type="molecule type" value="Genomic_DNA"/>
</dbReference>
<dbReference type="RefSeq" id="WP_011038427.1">
    <property type="nucleotide sequence ID" value="NZ_CP155948.1"/>
</dbReference>
<dbReference type="SMR" id="Q4UYG2"/>
<dbReference type="GeneID" id="58012138"/>
<dbReference type="KEGG" id="xcb:XC_0836"/>
<dbReference type="HOGENOM" id="CLU_031953_0_3_6"/>
<dbReference type="UniPathway" id="UPA00048">
    <property type="reaction ID" value="UER00072"/>
</dbReference>
<dbReference type="Proteomes" id="UP000000420">
    <property type="component" value="Chromosome"/>
</dbReference>
<dbReference type="GO" id="GO:0005829">
    <property type="term" value="C:cytosol"/>
    <property type="evidence" value="ECO:0007669"/>
    <property type="project" value="TreeGrafter"/>
</dbReference>
<dbReference type="GO" id="GO:0003862">
    <property type="term" value="F:3-isopropylmalate dehydrogenase activity"/>
    <property type="evidence" value="ECO:0007669"/>
    <property type="project" value="UniProtKB-UniRule"/>
</dbReference>
<dbReference type="GO" id="GO:0000287">
    <property type="term" value="F:magnesium ion binding"/>
    <property type="evidence" value="ECO:0007669"/>
    <property type="project" value="InterPro"/>
</dbReference>
<dbReference type="GO" id="GO:0051287">
    <property type="term" value="F:NAD binding"/>
    <property type="evidence" value="ECO:0007669"/>
    <property type="project" value="InterPro"/>
</dbReference>
<dbReference type="GO" id="GO:0009098">
    <property type="term" value="P:L-leucine biosynthetic process"/>
    <property type="evidence" value="ECO:0007669"/>
    <property type="project" value="UniProtKB-UniRule"/>
</dbReference>
<dbReference type="FunFam" id="3.40.718.10:FF:000004">
    <property type="entry name" value="3-isopropylmalate dehydrogenase"/>
    <property type="match status" value="1"/>
</dbReference>
<dbReference type="Gene3D" id="3.40.718.10">
    <property type="entry name" value="Isopropylmalate Dehydrogenase"/>
    <property type="match status" value="1"/>
</dbReference>
<dbReference type="HAMAP" id="MF_01033">
    <property type="entry name" value="LeuB_type1"/>
    <property type="match status" value="1"/>
</dbReference>
<dbReference type="InterPro" id="IPR019818">
    <property type="entry name" value="IsoCit/isopropylmalate_DH_CS"/>
</dbReference>
<dbReference type="InterPro" id="IPR024084">
    <property type="entry name" value="IsoPropMal-DH-like_dom"/>
</dbReference>
<dbReference type="InterPro" id="IPR004429">
    <property type="entry name" value="Isopropylmalate_DH"/>
</dbReference>
<dbReference type="NCBIfam" id="TIGR00169">
    <property type="entry name" value="leuB"/>
    <property type="match status" value="1"/>
</dbReference>
<dbReference type="PANTHER" id="PTHR42979">
    <property type="entry name" value="3-ISOPROPYLMALATE DEHYDROGENASE"/>
    <property type="match status" value="1"/>
</dbReference>
<dbReference type="PANTHER" id="PTHR42979:SF1">
    <property type="entry name" value="3-ISOPROPYLMALATE DEHYDROGENASE"/>
    <property type="match status" value="1"/>
</dbReference>
<dbReference type="Pfam" id="PF00180">
    <property type="entry name" value="Iso_dh"/>
    <property type="match status" value="1"/>
</dbReference>
<dbReference type="SMART" id="SM01329">
    <property type="entry name" value="Iso_dh"/>
    <property type="match status" value="1"/>
</dbReference>
<dbReference type="SUPFAM" id="SSF53659">
    <property type="entry name" value="Isocitrate/Isopropylmalate dehydrogenase-like"/>
    <property type="match status" value="1"/>
</dbReference>
<dbReference type="PROSITE" id="PS00470">
    <property type="entry name" value="IDH_IMDH"/>
    <property type="match status" value="1"/>
</dbReference>
<feature type="chain" id="PRO_0000083786" description="3-isopropylmalate dehydrogenase">
    <location>
        <begin position="1"/>
        <end position="357"/>
    </location>
</feature>
<feature type="binding site" evidence="1">
    <location>
        <begin position="76"/>
        <end position="89"/>
    </location>
    <ligand>
        <name>NAD(+)</name>
        <dbReference type="ChEBI" id="CHEBI:57540"/>
    </ligand>
</feature>
<feature type="binding site" evidence="1">
    <location>
        <position position="96"/>
    </location>
    <ligand>
        <name>substrate</name>
    </ligand>
</feature>
<feature type="binding site" evidence="1">
    <location>
        <position position="106"/>
    </location>
    <ligand>
        <name>substrate</name>
    </ligand>
</feature>
<feature type="binding site" evidence="1">
    <location>
        <position position="134"/>
    </location>
    <ligand>
        <name>substrate</name>
    </ligand>
</feature>
<feature type="binding site" evidence="1">
    <location>
        <position position="224"/>
    </location>
    <ligand>
        <name>Mg(2+)</name>
        <dbReference type="ChEBI" id="CHEBI:18420"/>
    </ligand>
</feature>
<feature type="binding site" evidence="1">
    <location>
        <position position="224"/>
    </location>
    <ligand>
        <name>substrate</name>
    </ligand>
</feature>
<feature type="binding site" evidence="1">
    <location>
        <position position="248"/>
    </location>
    <ligand>
        <name>Mg(2+)</name>
        <dbReference type="ChEBI" id="CHEBI:18420"/>
    </ligand>
</feature>
<feature type="binding site" evidence="1">
    <location>
        <position position="252"/>
    </location>
    <ligand>
        <name>Mg(2+)</name>
        <dbReference type="ChEBI" id="CHEBI:18420"/>
    </ligand>
</feature>
<feature type="binding site" evidence="1">
    <location>
        <begin position="282"/>
        <end position="294"/>
    </location>
    <ligand>
        <name>NAD(+)</name>
        <dbReference type="ChEBI" id="CHEBI:57540"/>
    </ligand>
</feature>
<feature type="site" description="Important for catalysis" evidence="1">
    <location>
        <position position="141"/>
    </location>
</feature>
<feature type="site" description="Important for catalysis" evidence="1">
    <location>
        <position position="192"/>
    </location>
</feature>
<evidence type="ECO:0000255" key="1">
    <source>
        <dbReference type="HAMAP-Rule" id="MF_01033"/>
    </source>
</evidence>
<proteinExistence type="inferred from homology"/>
<accession>Q4UYG2</accession>
<keyword id="KW-0028">Amino-acid biosynthesis</keyword>
<keyword id="KW-0100">Branched-chain amino acid biosynthesis</keyword>
<keyword id="KW-0963">Cytoplasm</keyword>
<keyword id="KW-0432">Leucine biosynthesis</keyword>
<keyword id="KW-0460">Magnesium</keyword>
<keyword id="KW-0464">Manganese</keyword>
<keyword id="KW-0479">Metal-binding</keyword>
<keyword id="KW-0520">NAD</keyword>
<keyword id="KW-0560">Oxidoreductase</keyword>
<organism>
    <name type="scientific">Xanthomonas campestris pv. campestris (strain 8004)</name>
    <dbReference type="NCBI Taxonomy" id="314565"/>
    <lineage>
        <taxon>Bacteria</taxon>
        <taxon>Pseudomonadati</taxon>
        <taxon>Pseudomonadota</taxon>
        <taxon>Gammaproteobacteria</taxon>
        <taxon>Lysobacterales</taxon>
        <taxon>Lysobacteraceae</taxon>
        <taxon>Xanthomonas</taxon>
    </lineage>
</organism>
<sequence>MSKQILILPGDGIGPEIMAEAVKVLTRIDTQHTLGVTLVYDELGGAAYDKYGSPLADETLERARAADAVLLGAVGGPQWDTIDPALRPERGLLKIRSQLGLFANLRPALLYPQLADASTLKPEVVSGLDLLILRELTGGIYFGQPRGTRTLDNGERQAYDTLPYSESEIRRIAKAGFEMARLRGKKLCSVDKANVLASSQLWRAVVEEVAKDYPDIALSHMYVDNAAMQLVRAPKQFDVIVTDNMFGDILSDQASMLTGSIGMLPSASLDANSKGMYEPCHGSAPDIAGQGIANPLATILSVAMMLRYTFAQAAAADAIEAAVGKVLDQGLRTADIWSEGTTKVGTAAMGDAVVAAL</sequence>